<organism>
    <name type="scientific">Staphylococcus aureus (strain NCTC 8325 / PS 47)</name>
    <dbReference type="NCBI Taxonomy" id="93061"/>
    <lineage>
        <taxon>Bacteria</taxon>
        <taxon>Bacillati</taxon>
        <taxon>Bacillota</taxon>
        <taxon>Bacilli</taxon>
        <taxon>Bacillales</taxon>
        <taxon>Staphylococcaceae</taxon>
        <taxon>Staphylococcus</taxon>
    </lineage>
</organism>
<proteinExistence type="evidence at protein level"/>
<dbReference type="EC" id="6.3.2.7" evidence="1 3 5"/>
<dbReference type="EMBL" id="CP000253">
    <property type="protein sequence ID" value="ABD30079.1"/>
    <property type="molecule type" value="Genomic_DNA"/>
</dbReference>
<dbReference type="RefSeq" id="WP_000340118.1">
    <property type="nucleotide sequence ID" value="NZ_LS483365.1"/>
</dbReference>
<dbReference type="RefSeq" id="YP_499507.1">
    <property type="nucleotide sequence ID" value="NC_007795.1"/>
</dbReference>
<dbReference type="PDB" id="4C12">
    <property type="method" value="X-ray"/>
    <property type="resolution" value="1.80 A"/>
    <property type="chains" value="A=1-493"/>
</dbReference>
<dbReference type="PDB" id="4C13">
    <property type="method" value="X-ray"/>
    <property type="resolution" value="1.90 A"/>
    <property type="chains" value="A=1-493"/>
</dbReference>
<dbReference type="PDBsum" id="4C12"/>
<dbReference type="PDBsum" id="4C13"/>
<dbReference type="SMR" id="Q2FZP6"/>
<dbReference type="STRING" id="93061.SAOUHSC_00954"/>
<dbReference type="BindingDB" id="Q2FZP6"/>
<dbReference type="PaxDb" id="1280-SAXN108_1015"/>
<dbReference type="GeneID" id="3920665"/>
<dbReference type="KEGG" id="sao:SAOUHSC_00954"/>
<dbReference type="PATRIC" id="fig|93061.5.peg.876"/>
<dbReference type="eggNOG" id="COG0769">
    <property type="taxonomic scope" value="Bacteria"/>
</dbReference>
<dbReference type="HOGENOM" id="CLU_022291_0_1_9"/>
<dbReference type="OrthoDB" id="9800958at2"/>
<dbReference type="BRENDA" id="6.3.2.7">
    <property type="organism ID" value="3352"/>
</dbReference>
<dbReference type="UniPathway" id="UPA00219"/>
<dbReference type="EvolutionaryTrace" id="Q2FZP6"/>
<dbReference type="Proteomes" id="UP000008816">
    <property type="component" value="Chromosome"/>
</dbReference>
<dbReference type="GO" id="GO:0005737">
    <property type="term" value="C:cytoplasm"/>
    <property type="evidence" value="ECO:0007669"/>
    <property type="project" value="UniProtKB-SubCell"/>
</dbReference>
<dbReference type="GO" id="GO:0005524">
    <property type="term" value="F:ATP binding"/>
    <property type="evidence" value="ECO:0007669"/>
    <property type="project" value="UniProtKB-UniRule"/>
</dbReference>
<dbReference type="GO" id="GO:0000287">
    <property type="term" value="F:magnesium ion binding"/>
    <property type="evidence" value="ECO:0007669"/>
    <property type="project" value="UniProtKB-UniRule"/>
</dbReference>
<dbReference type="GO" id="GO:0047482">
    <property type="term" value="F:UDP-N-acetylmuramoyl-L-alanyl-D-glutamate-L-lysine ligase activity"/>
    <property type="evidence" value="ECO:0007669"/>
    <property type="project" value="UniProtKB-UniRule"/>
</dbReference>
<dbReference type="GO" id="GO:0051301">
    <property type="term" value="P:cell division"/>
    <property type="evidence" value="ECO:0007669"/>
    <property type="project" value="UniProtKB-KW"/>
</dbReference>
<dbReference type="GO" id="GO:0071555">
    <property type="term" value="P:cell wall organization"/>
    <property type="evidence" value="ECO:0007669"/>
    <property type="project" value="UniProtKB-KW"/>
</dbReference>
<dbReference type="GO" id="GO:0009252">
    <property type="term" value="P:peptidoglycan biosynthetic process"/>
    <property type="evidence" value="ECO:0007669"/>
    <property type="project" value="UniProtKB-UniRule"/>
</dbReference>
<dbReference type="GO" id="GO:0008360">
    <property type="term" value="P:regulation of cell shape"/>
    <property type="evidence" value="ECO:0007669"/>
    <property type="project" value="UniProtKB-KW"/>
</dbReference>
<dbReference type="Gene3D" id="3.90.190.20">
    <property type="entry name" value="Mur ligase, C-terminal domain"/>
    <property type="match status" value="1"/>
</dbReference>
<dbReference type="Gene3D" id="3.40.1190.10">
    <property type="entry name" value="Mur-like, catalytic domain"/>
    <property type="match status" value="1"/>
</dbReference>
<dbReference type="Gene3D" id="3.40.1390.10">
    <property type="entry name" value="MurE/MurF, N-terminal domain"/>
    <property type="match status" value="1"/>
</dbReference>
<dbReference type="HAMAP" id="MF_00208">
    <property type="entry name" value="MurE"/>
    <property type="match status" value="1"/>
</dbReference>
<dbReference type="InterPro" id="IPR036565">
    <property type="entry name" value="Mur-like_cat_sf"/>
</dbReference>
<dbReference type="InterPro" id="IPR004101">
    <property type="entry name" value="Mur_ligase_C"/>
</dbReference>
<dbReference type="InterPro" id="IPR036615">
    <property type="entry name" value="Mur_ligase_C_dom_sf"/>
</dbReference>
<dbReference type="InterPro" id="IPR013221">
    <property type="entry name" value="Mur_ligase_cen"/>
</dbReference>
<dbReference type="InterPro" id="IPR035911">
    <property type="entry name" value="MurE/MurF_N"/>
</dbReference>
<dbReference type="InterPro" id="IPR005761">
    <property type="entry name" value="UDP-N-AcMur-Glu-dNH2Pim_ligase"/>
</dbReference>
<dbReference type="NCBIfam" id="TIGR01085">
    <property type="entry name" value="murE"/>
    <property type="match status" value="1"/>
</dbReference>
<dbReference type="NCBIfam" id="NF001126">
    <property type="entry name" value="PRK00139.1-4"/>
    <property type="match status" value="1"/>
</dbReference>
<dbReference type="NCBIfam" id="NF010628">
    <property type="entry name" value="PRK14022.1"/>
    <property type="match status" value="1"/>
</dbReference>
<dbReference type="PANTHER" id="PTHR23135">
    <property type="entry name" value="MUR LIGASE FAMILY MEMBER"/>
    <property type="match status" value="1"/>
</dbReference>
<dbReference type="PANTHER" id="PTHR23135:SF4">
    <property type="entry name" value="UDP-N-ACETYLMURAMOYL-L-ALANYL-D-GLUTAMATE--2,6-DIAMINOPIMELATE LIGASE MURE HOMOLOG, CHLOROPLASTIC"/>
    <property type="match status" value="1"/>
</dbReference>
<dbReference type="Pfam" id="PF02875">
    <property type="entry name" value="Mur_ligase_C"/>
    <property type="match status" value="1"/>
</dbReference>
<dbReference type="Pfam" id="PF08245">
    <property type="entry name" value="Mur_ligase_M"/>
    <property type="match status" value="1"/>
</dbReference>
<dbReference type="SUPFAM" id="SSF53623">
    <property type="entry name" value="MurD-like peptide ligases, catalytic domain"/>
    <property type="match status" value="1"/>
</dbReference>
<dbReference type="SUPFAM" id="SSF53244">
    <property type="entry name" value="MurD-like peptide ligases, peptide-binding domain"/>
    <property type="match status" value="1"/>
</dbReference>
<dbReference type="SUPFAM" id="SSF63418">
    <property type="entry name" value="MurE/MurF N-terminal domain"/>
    <property type="match status" value="1"/>
</dbReference>
<gene>
    <name evidence="6" type="primary">murE</name>
    <name type="ordered locus">SAOUHSC_00954</name>
</gene>
<comment type="function">
    <text evidence="2 3 4 5">Catalyzes the addition of L-lysine to the nucleotide precursor UDP-N-acetylmuramoyl-L-alanyl-D-glutamate (UMAG) in the biosynthesis of bacterial cell-wall peptidoglycan. Cannot use diaminopimelate as substrate (PubMed:10498701, PubMed:14114846, PubMed:20659527). Can accept L-ornithine as substrate, but the efficiency is 400-fold lower than that with L-lysine (PubMed:20659527). Seems to have a role in beta-lactam antibiotic resistance (PubMed:14996801).</text>
</comment>
<comment type="catalytic activity">
    <reaction evidence="1 3 5">
        <text>UDP-N-acetyl-alpha-D-muramoyl-L-alanyl-D-glutamate + L-lysine + ATP = UDP-N-acetyl-alpha-D-muramoyl-L-alanyl-gamma-D-glutamyl-L-lysine + ADP + phosphate + H(+)</text>
        <dbReference type="Rhea" id="RHEA:17969"/>
        <dbReference type="ChEBI" id="CHEBI:15378"/>
        <dbReference type="ChEBI" id="CHEBI:30616"/>
        <dbReference type="ChEBI" id="CHEBI:32551"/>
        <dbReference type="ChEBI" id="CHEBI:43474"/>
        <dbReference type="ChEBI" id="CHEBI:83900"/>
        <dbReference type="ChEBI" id="CHEBI:83903"/>
        <dbReference type="ChEBI" id="CHEBI:456216"/>
        <dbReference type="EC" id="6.3.2.7"/>
    </reaction>
</comment>
<comment type="cofactor">
    <cofactor evidence="1">
        <name>Mg(2+)</name>
        <dbReference type="ChEBI" id="CHEBI:18420"/>
    </cofactor>
</comment>
<comment type="biophysicochemical properties">
    <kinetics>
        <KM evidence="3">0.4 mM for UDP-N-acetylmuramoyl-L-Ala-D-Glu</KM>
        <KM evidence="5">0.087 mM for UDP-N-acetylmuramoyl-L-Ala-D-Glu</KM>
        <KM evidence="3">0.5 mM for L-lysine</KM>
        <KM evidence="5">0.55 mM for L-lysine</KM>
        <KM evidence="5">37 mM for L-ornithine</KM>
        <KM evidence="3">0.3 mM for ATP</KM>
        <KM evidence="5">0.53 mM for ATP</KM>
        <Vmax evidence="5">5.3 umol/min/mg enzyme with L-lysine as substrate</Vmax>
        <Vmax evidence="5">0.87 umol/min/mg enzyme with L-ornithine as substrate</Vmax>
    </kinetics>
    <phDependence>
        <text evidence="3 5">Optimum pH is 8.4-9 (PubMed:14114846). Optimum pH is 8.4-9.2 (PubMed:20659527).</text>
    </phDependence>
</comment>
<comment type="pathway">
    <text evidence="1">Cell wall biogenesis; peptidoglycan biosynthesis.</text>
</comment>
<comment type="subcellular location">
    <subcellularLocation>
        <location evidence="1">Cytoplasm</location>
    </subcellularLocation>
</comment>
<comment type="PTM">
    <text evidence="1">Carboxylation is probably crucial for Mg(2+) binding and, consequently, for the gamma-phosphate positioning of ATP.</text>
</comment>
<comment type="miscellaneous">
    <text evidence="2">Expression of this protein in E.coli results in 50% incorporation of L-Lys into the peptidoglycan (which normally contains meso-diaminopimelate instead), leading to abnormal morphological changes and subsequent cell lysis.</text>
</comment>
<comment type="similarity">
    <text evidence="1">Belongs to the MurCDEF family. MurE subfamily.</text>
</comment>
<name>MURE_STAA8</name>
<reference key="1">
    <citation type="book" date="2006" name="Gram positive pathogens, 2nd edition">
        <title>The Staphylococcus aureus NCTC 8325 genome.</title>
        <editorList>
            <person name="Fischetti V."/>
            <person name="Novick R."/>
            <person name="Ferretti J."/>
            <person name="Portnoy D."/>
            <person name="Rood J."/>
        </editorList>
        <authorList>
            <person name="Gillaspy A.F."/>
            <person name="Worrell V."/>
            <person name="Orvis J."/>
            <person name="Roe B.A."/>
            <person name="Dyer D.W."/>
            <person name="Iandolo J.J."/>
        </authorList>
    </citation>
    <scope>NUCLEOTIDE SEQUENCE [LARGE SCALE GENOMIC DNA]</scope>
    <source>
        <strain>NCTC 8325 / PS 47</strain>
    </source>
</reference>
<reference key="2">
    <citation type="journal article" date="1964" name="J. Biol. Chem.">
        <title>Enzymatic synthesis of the peptide in bacterial uridine nucleotides. III. Purification and properties of L-lysine-adding enzyme.</title>
        <authorList>
            <person name="Ito E."/>
            <person name="Strominger J.L."/>
        </authorList>
    </citation>
    <scope>FUNCTION</scope>
    <scope>CHARACTERIZATION</scope>
    <scope>CATALYTIC ACTIVITY</scope>
    <scope>SUBSTRATE SPECIFICITY</scope>
    <scope>BIOPHYSICOCHEMICAL PROPERTIES</scope>
    <source>
        <strain>Copenhagen</strain>
    </source>
</reference>
<reference key="3">
    <citation type="journal article" date="1999" name="J. Bacteriol.">
        <title>Expression of the Staphylococcus aureus UDP-N-acetylmuramoyl-L-alanyl-D-glutamate:L-lysine ligase in Escherichia coli and effects on peptidoglycan biosynthesis and cell growth.</title>
        <authorList>
            <person name="Mengin-Lecreulx D."/>
            <person name="Falla T."/>
            <person name="Blanot D."/>
            <person name="van Heijenoort J."/>
            <person name="Adams D.J."/>
            <person name="Chopra I."/>
        </authorList>
    </citation>
    <scope>FUNCTION</scope>
</reference>
<reference key="4">
    <citation type="journal article" date="2004" name="J. Bacteriol.">
        <title>Role of murE in the expression of beta-lactam antibiotic resistance in Staphylococcus aureus.</title>
        <authorList>
            <person name="Gardete S."/>
            <person name="Ludovice A.M."/>
            <person name="Sobral R.G."/>
            <person name="Filipe S.R."/>
            <person name="de Lencastre H."/>
            <person name="Tomasz A."/>
        </authorList>
    </citation>
    <scope>ROLE IN ANTIBIOTIC RESISTANCE</scope>
</reference>
<reference key="5">
    <citation type="journal article" date="2010" name="Biochimie">
        <title>Purification and biochemical characterization of Mur ligases from Staphylococcus aureus.</title>
        <authorList>
            <person name="Patin D."/>
            <person name="Boniface A."/>
            <person name="Kovac A."/>
            <person name="Herve M."/>
            <person name="Dementin S."/>
            <person name="Barreteau H."/>
            <person name="Mengin-Lecreulx D."/>
            <person name="Blanot D."/>
        </authorList>
    </citation>
    <scope>FUNCTION</scope>
    <scope>CATALYTIC ACTIVITY</scope>
    <scope>BIOPHYSICOCHEMICAL PROPERTIES</scope>
    <source>
        <strain>NCTC 8325 / PS 47</strain>
    </source>
</reference>
<evidence type="ECO:0000255" key="1">
    <source>
        <dbReference type="HAMAP-Rule" id="MF_00208"/>
    </source>
</evidence>
<evidence type="ECO:0000269" key="2">
    <source>
    </source>
</evidence>
<evidence type="ECO:0000269" key="3">
    <source>
    </source>
</evidence>
<evidence type="ECO:0000269" key="4">
    <source>
    </source>
</evidence>
<evidence type="ECO:0000269" key="5">
    <source>
    </source>
</evidence>
<evidence type="ECO:0000303" key="6">
    <source>
    </source>
</evidence>
<evidence type="ECO:0007829" key="7">
    <source>
        <dbReference type="PDB" id="4C12"/>
    </source>
</evidence>
<sequence length="493" mass="54105">MDASTLFKKVKVKRVLGSLEQQIDDITTDSRTAREGSIFVASVGYTVDSHKFCQNVADQGCKLVVVNKEQSLPANVTQVVVPDTLRVASILAHTLYDYPSHQLVTFGVTGTNGKTSIATMIHLIQRKLQKNSAYLGTNGFQINETKTKGANTTPETVSLTKKIKEAVDAGAESMTLEVSSHGLVLGRLRGVEFDVAIFSNLTQDHLDFHGTMEAYGHAKSLLFSQLGEDLSKEKYVVLNNDDSFSEYLRTVTPYEVFSYGIDEEAQFMAKNIQESLQGVSFDFVTPFGTYPVKSPYVGKFNISNIMAAMIAVWSKGTSLETIIKAVENLEPVEGRLEVLDPSLPIDLIIDYAHTADGMNKLIDAVQPFVKQKLIFLVGMAGERDLTKTPEMGRVACRADYVIFTPDNPANDDPKMLTAELAKGATHQNYIEFDDRAEGIKHAIDIAEPGDTVVLASKGREPYQIMPGHIKVPHRDDLIGLEAAYKKFGGGPVD</sequence>
<feature type="chain" id="PRO_1000012382" description="UDP-N-acetylmuramoyl-L-alanyl-D-glutamate--L-lysine ligase">
    <location>
        <begin position="1"/>
        <end position="493"/>
    </location>
</feature>
<feature type="short sequence motif" description="L-lysine recognition motif" evidence="1">
    <location>
        <begin position="406"/>
        <end position="409"/>
    </location>
</feature>
<feature type="binding site" evidence="1">
    <location>
        <position position="30"/>
    </location>
    <ligand>
        <name>UDP-N-acetyl-alpha-D-muramoyl-L-alanyl-D-glutamate</name>
        <dbReference type="ChEBI" id="CHEBI:83900"/>
    </ligand>
</feature>
<feature type="binding site" evidence="1">
    <location>
        <begin position="110"/>
        <end position="116"/>
    </location>
    <ligand>
        <name>ATP</name>
        <dbReference type="ChEBI" id="CHEBI:30616"/>
    </ligand>
</feature>
<feature type="binding site" evidence="1">
    <location>
        <position position="151"/>
    </location>
    <ligand>
        <name>UDP-N-acetyl-alpha-D-muramoyl-L-alanyl-D-glutamate</name>
        <dbReference type="ChEBI" id="CHEBI:83900"/>
    </ligand>
</feature>
<feature type="binding site" evidence="1">
    <location>
        <begin position="152"/>
        <end position="153"/>
    </location>
    <ligand>
        <name>UDP-N-acetyl-alpha-D-muramoyl-L-alanyl-D-glutamate</name>
        <dbReference type="ChEBI" id="CHEBI:83900"/>
    </ligand>
</feature>
<feature type="binding site" evidence="1">
    <location>
        <position position="179"/>
    </location>
    <ligand>
        <name>UDP-N-acetyl-alpha-D-muramoyl-L-alanyl-D-glutamate</name>
        <dbReference type="ChEBI" id="CHEBI:83900"/>
    </ligand>
</feature>
<feature type="binding site" evidence="1">
    <location>
        <position position="187"/>
    </location>
    <ligand>
        <name>UDP-N-acetyl-alpha-D-muramoyl-L-alanyl-D-glutamate</name>
        <dbReference type="ChEBI" id="CHEBI:83900"/>
    </ligand>
</feature>
<feature type="modified residue" description="N6-carboxylysine" evidence="1">
    <location>
        <position position="219"/>
    </location>
</feature>
<feature type="helix" evidence="7">
    <location>
        <begin position="3"/>
        <end position="7"/>
    </location>
</feature>
<feature type="strand" evidence="7">
    <location>
        <begin position="14"/>
        <end position="17"/>
    </location>
</feature>
<feature type="strand" evidence="7">
    <location>
        <begin position="25"/>
        <end position="28"/>
    </location>
</feature>
<feature type="helix" evidence="7">
    <location>
        <begin position="30"/>
        <end position="32"/>
    </location>
</feature>
<feature type="strand" evidence="7">
    <location>
        <begin position="37"/>
        <end position="40"/>
    </location>
</feature>
<feature type="helix" evidence="7">
    <location>
        <begin position="49"/>
        <end position="52"/>
    </location>
</feature>
<feature type="helix" evidence="7">
    <location>
        <begin position="53"/>
        <end position="58"/>
    </location>
</feature>
<feature type="strand" evidence="7">
    <location>
        <begin position="63"/>
        <end position="68"/>
    </location>
</feature>
<feature type="strand" evidence="7">
    <location>
        <begin position="76"/>
        <end position="80"/>
    </location>
</feature>
<feature type="helix" evidence="7">
    <location>
        <begin position="84"/>
        <end position="95"/>
    </location>
</feature>
<feature type="helix" evidence="7">
    <location>
        <begin position="99"/>
        <end position="101"/>
    </location>
</feature>
<feature type="strand" evidence="7">
    <location>
        <begin position="102"/>
        <end position="112"/>
    </location>
</feature>
<feature type="helix" evidence="7">
    <location>
        <begin position="114"/>
        <end position="127"/>
    </location>
</feature>
<feature type="strand" evidence="7">
    <location>
        <begin position="132"/>
        <end position="136"/>
    </location>
</feature>
<feature type="strand" evidence="7">
    <location>
        <begin position="139"/>
        <end position="142"/>
    </location>
</feature>
<feature type="strand" evidence="7">
    <location>
        <begin position="145"/>
        <end position="147"/>
    </location>
</feature>
<feature type="helix" evidence="7">
    <location>
        <begin position="156"/>
        <end position="168"/>
    </location>
</feature>
<feature type="strand" evidence="7">
    <location>
        <begin position="172"/>
        <end position="177"/>
    </location>
</feature>
<feature type="helix" evidence="7">
    <location>
        <begin position="180"/>
        <end position="184"/>
    </location>
</feature>
<feature type="turn" evidence="7">
    <location>
        <begin position="185"/>
        <end position="190"/>
    </location>
</feature>
<feature type="strand" evidence="7">
    <location>
        <begin position="194"/>
        <end position="198"/>
    </location>
</feature>
<feature type="helix" evidence="7">
    <location>
        <begin position="206"/>
        <end position="209"/>
    </location>
</feature>
<feature type="helix" evidence="7">
    <location>
        <begin position="212"/>
        <end position="224"/>
    </location>
</feature>
<feature type="strand" evidence="7">
    <location>
        <begin position="235"/>
        <end position="239"/>
    </location>
</feature>
<feature type="helix" evidence="7">
    <location>
        <begin position="245"/>
        <end position="249"/>
    </location>
</feature>
<feature type="strand" evidence="7">
    <location>
        <begin position="254"/>
        <end position="263"/>
    </location>
</feature>
<feature type="strand" evidence="7">
    <location>
        <begin position="266"/>
        <end position="275"/>
    </location>
</feature>
<feature type="strand" evidence="7">
    <location>
        <begin position="278"/>
        <end position="285"/>
    </location>
</feature>
<feature type="strand" evidence="7">
    <location>
        <begin position="288"/>
        <end position="296"/>
    </location>
</feature>
<feature type="helix" evidence="7">
    <location>
        <begin position="299"/>
        <end position="314"/>
    </location>
</feature>
<feature type="helix" evidence="7">
    <location>
        <begin position="319"/>
        <end position="326"/>
    </location>
</feature>
<feature type="strand" evidence="7">
    <location>
        <begin position="335"/>
        <end position="338"/>
    </location>
</feature>
<feature type="strand" evidence="7">
    <location>
        <begin position="343"/>
        <end position="350"/>
    </location>
</feature>
<feature type="helix" evidence="7">
    <location>
        <begin position="355"/>
        <end position="365"/>
    </location>
</feature>
<feature type="helix" evidence="7">
    <location>
        <begin position="366"/>
        <end position="368"/>
    </location>
</feature>
<feature type="strand" evidence="7">
    <location>
        <begin position="373"/>
        <end position="380"/>
    </location>
</feature>
<feature type="helix" evidence="7">
    <location>
        <begin position="388"/>
        <end position="395"/>
    </location>
</feature>
<feature type="strand" evidence="7">
    <location>
        <begin position="398"/>
        <end position="407"/>
    </location>
</feature>
<feature type="helix" evidence="7">
    <location>
        <begin position="413"/>
        <end position="421"/>
    </location>
</feature>
<feature type="strand" evidence="7">
    <location>
        <begin position="425"/>
        <end position="427"/>
    </location>
</feature>
<feature type="strand" evidence="7">
    <location>
        <begin position="429"/>
        <end position="431"/>
    </location>
</feature>
<feature type="helix" evidence="7">
    <location>
        <begin position="435"/>
        <end position="445"/>
    </location>
</feature>
<feature type="strand" evidence="7">
    <location>
        <begin position="451"/>
        <end position="456"/>
    </location>
</feature>
<feature type="strand" evidence="7">
    <location>
        <begin position="462"/>
        <end position="465"/>
    </location>
</feature>
<feature type="helix" evidence="7">
    <location>
        <begin position="466"/>
        <end position="468"/>
    </location>
</feature>
<feature type="strand" evidence="7">
    <location>
        <begin position="469"/>
        <end position="472"/>
    </location>
</feature>
<feature type="helix" evidence="7">
    <location>
        <begin position="475"/>
        <end position="487"/>
    </location>
</feature>
<protein>
    <recommendedName>
        <fullName evidence="1">UDP-N-acetylmuramoyl-L-alanyl-D-glutamate--L-lysine ligase</fullName>
        <ecNumber evidence="1 3 5">6.3.2.7</ecNumber>
    </recommendedName>
    <alternativeName>
        <fullName evidence="1">L-lysine-adding enzyme</fullName>
    </alternativeName>
    <alternativeName>
        <fullName evidence="1">UDP-MurNAc-L-Ala-D-Glu:L-Lys ligase</fullName>
    </alternativeName>
    <alternativeName>
        <fullName evidence="1">UDP-MurNAc-tripeptide synthetase</fullName>
    </alternativeName>
    <alternativeName>
        <fullName evidence="1">UDP-N-acetylmuramyl-tripeptide synthetase</fullName>
    </alternativeName>
</protein>
<keyword id="KW-0002">3D-structure</keyword>
<keyword id="KW-0067">ATP-binding</keyword>
<keyword id="KW-0131">Cell cycle</keyword>
<keyword id="KW-0132">Cell division</keyword>
<keyword id="KW-0133">Cell shape</keyword>
<keyword id="KW-0961">Cell wall biogenesis/degradation</keyword>
<keyword id="KW-0963">Cytoplasm</keyword>
<keyword id="KW-0436">Ligase</keyword>
<keyword id="KW-0460">Magnesium</keyword>
<keyword id="KW-0547">Nucleotide-binding</keyword>
<keyword id="KW-0573">Peptidoglycan synthesis</keyword>
<keyword id="KW-1185">Reference proteome</keyword>
<accession>Q2FZP6</accession>